<sequence>MNGTEGPNFYVPMSNKTGIVRSPFEYPQYYLAEPWKYSVLAAYMFLLILLGLPINFMTLYVTIQHKKLRTPLNYILLNLAFANHFMVLCGFTITMYTSLHGYFVFGQTGCYFEGFFATLGGEIALWSLVVLAIERYIVVCKPMSNFRFGENHAMMGVAFTWIMALACAVPPLFGWSRYIPEGMQCSCGVDYYTLKPEVNNESFVIYMFVVHFLIPLIIISFCYGRLVCTVKEAAAQQQESATTQKAEKEVTRMVVIMVIFFLICWVPYAYVAFYIFTHQGSEFGPIFMTVPAFFAKSSAIYNPVIYIMLNKQFRNCMITTLCCGKNPFGDEDASSAATSKTEATSVSTSQVSPA</sequence>
<protein>
    <recommendedName>
        <fullName>Rhodopsin</fullName>
    </recommendedName>
</protein>
<dbReference type="EMBL" id="S79840">
    <property type="protein sequence ID" value="AAB35478.1"/>
    <property type="molecule type" value="mRNA"/>
</dbReference>
<dbReference type="SMR" id="P51470"/>
<dbReference type="GlyCosmos" id="P51470">
    <property type="glycosylation" value="2 sites, No reported glycans"/>
</dbReference>
<dbReference type="SwissPalm" id="P51470"/>
<dbReference type="GO" id="GO:0016020">
    <property type="term" value="C:membrane"/>
    <property type="evidence" value="ECO:0000250"/>
    <property type="project" value="UniProtKB"/>
</dbReference>
<dbReference type="GO" id="GO:0097381">
    <property type="term" value="C:photoreceptor disc membrane"/>
    <property type="evidence" value="ECO:0000250"/>
    <property type="project" value="UniProtKB"/>
</dbReference>
<dbReference type="GO" id="GO:0005886">
    <property type="term" value="C:plasma membrane"/>
    <property type="evidence" value="ECO:0000250"/>
    <property type="project" value="UniProtKB"/>
</dbReference>
<dbReference type="GO" id="GO:0005502">
    <property type="term" value="F:11-cis retinal binding"/>
    <property type="evidence" value="ECO:0000250"/>
    <property type="project" value="UniProtKB"/>
</dbReference>
<dbReference type="GO" id="GO:0008020">
    <property type="term" value="F:G protein-coupled photoreceptor activity"/>
    <property type="evidence" value="ECO:0000250"/>
    <property type="project" value="UniProtKB"/>
</dbReference>
<dbReference type="GO" id="GO:0016038">
    <property type="term" value="P:absorption of visible light"/>
    <property type="evidence" value="ECO:0000250"/>
    <property type="project" value="UniProtKB"/>
</dbReference>
<dbReference type="GO" id="GO:0016056">
    <property type="term" value="P:G protein-coupled opsin signaling pathway"/>
    <property type="evidence" value="ECO:0000250"/>
    <property type="project" value="UniProtKB"/>
</dbReference>
<dbReference type="GO" id="GO:0007601">
    <property type="term" value="P:visual perception"/>
    <property type="evidence" value="ECO:0007669"/>
    <property type="project" value="UniProtKB-KW"/>
</dbReference>
<dbReference type="CDD" id="cd15080">
    <property type="entry name" value="7tmA_MWS_opsin"/>
    <property type="match status" value="1"/>
</dbReference>
<dbReference type="FunFam" id="1.20.1070.10:FF:000018">
    <property type="entry name" value="Rhodopsin"/>
    <property type="match status" value="1"/>
</dbReference>
<dbReference type="Gene3D" id="1.20.1070.10">
    <property type="entry name" value="Rhodopsin 7-helix transmembrane proteins"/>
    <property type="match status" value="1"/>
</dbReference>
<dbReference type="InterPro" id="IPR050125">
    <property type="entry name" value="GPCR_opsins"/>
</dbReference>
<dbReference type="InterPro" id="IPR000276">
    <property type="entry name" value="GPCR_Rhodpsn"/>
</dbReference>
<dbReference type="InterPro" id="IPR017452">
    <property type="entry name" value="GPCR_Rhodpsn_7TM"/>
</dbReference>
<dbReference type="InterPro" id="IPR001760">
    <property type="entry name" value="Opsin"/>
</dbReference>
<dbReference type="InterPro" id="IPR027430">
    <property type="entry name" value="Retinal_BS"/>
</dbReference>
<dbReference type="InterPro" id="IPR000732">
    <property type="entry name" value="Rhodopsin"/>
</dbReference>
<dbReference type="InterPro" id="IPR019477">
    <property type="entry name" value="Rhodopsin_N"/>
</dbReference>
<dbReference type="PANTHER" id="PTHR24240">
    <property type="entry name" value="OPSIN"/>
    <property type="match status" value="1"/>
</dbReference>
<dbReference type="Pfam" id="PF00001">
    <property type="entry name" value="7tm_1"/>
    <property type="match status" value="1"/>
</dbReference>
<dbReference type="Pfam" id="PF10413">
    <property type="entry name" value="Rhodopsin_N"/>
    <property type="match status" value="1"/>
</dbReference>
<dbReference type="PRINTS" id="PR00237">
    <property type="entry name" value="GPCRRHODOPSN"/>
</dbReference>
<dbReference type="PRINTS" id="PR00238">
    <property type="entry name" value="OPSIN"/>
</dbReference>
<dbReference type="PRINTS" id="PR00579">
    <property type="entry name" value="RHODOPSIN"/>
</dbReference>
<dbReference type="SUPFAM" id="SSF81321">
    <property type="entry name" value="Family A G protein-coupled receptor-like"/>
    <property type="match status" value="1"/>
</dbReference>
<dbReference type="PROSITE" id="PS00237">
    <property type="entry name" value="G_PROTEIN_RECEP_F1_1"/>
    <property type="match status" value="1"/>
</dbReference>
<dbReference type="PROSITE" id="PS50262">
    <property type="entry name" value="G_PROTEIN_RECEP_F1_2"/>
    <property type="match status" value="1"/>
</dbReference>
<dbReference type="PROSITE" id="PS00238">
    <property type="entry name" value="OPSIN"/>
    <property type="match status" value="1"/>
</dbReference>
<gene>
    <name type="primary">RHO</name>
</gene>
<comment type="function">
    <text evidence="1 2 6">Photoreceptor required for image-forming vision at low light intensity. Required for photoreceptor cell viability after birth (By similarity). May use a mixture of retinal and 3-dehydroretinal as visual pigment (PubMed:5315587). Light-induced isomerization of 11-cis to all-trans retinal triggers a conformational change that activates signaling via G-proteins. Subsequent receptor phosphorylation mediates displacement of the bound G-protein alpha subunit by arrestin and terminates signaling (By similarity).</text>
</comment>
<comment type="subcellular location">
    <subcellularLocation>
        <location evidence="2">Membrane</location>
        <topology evidence="2">Multi-pass membrane protein</topology>
    </subcellularLocation>
    <subcellularLocation>
        <location evidence="2">Cell projection</location>
        <location evidence="2">Cilium</location>
        <location evidence="2">Photoreceptor outer segment</location>
    </subcellularLocation>
    <text evidence="2">Synthesized in the inner segment (IS) of rod photoreceptor cells before vectorial transport to disk membranes in the rod outer segment (OS) photosensory cilia.</text>
</comment>
<comment type="tissue specificity">
    <text evidence="6">Retina. Localized in the ventral part of the retina.</text>
</comment>
<comment type="PTM">
    <text evidence="1">Contains one covalently linked retinal chromophore. Upon light absorption, the covalently bound 11-cis-retinal is converted to all-trans-retinal. After hydrolysis of the Schiff base and release of the covalently bound all-trans-retinal, active rhodopsin is regenerated by binding of a fresh molecule of 11-cis-retinal.</text>
</comment>
<comment type="similarity">
    <text evidence="4">Belongs to the G-protein coupled receptor 1 family. Opsin subfamily.</text>
</comment>
<name>OPSD_AQUCT</name>
<accession>P51470</accession>
<feature type="chain" id="PRO_0000197705" description="Rhodopsin">
    <location>
        <begin position="1"/>
        <end position="354"/>
    </location>
</feature>
<feature type="topological domain" description="Extracellular" evidence="7">
    <location>
        <begin position="1"/>
        <end position="36"/>
    </location>
</feature>
<feature type="transmembrane region" description="Helical; Name=1" evidence="1">
    <location>
        <begin position="37"/>
        <end position="61"/>
    </location>
</feature>
<feature type="topological domain" description="Cytoplasmic" evidence="7">
    <location>
        <begin position="62"/>
        <end position="73"/>
    </location>
</feature>
<feature type="transmembrane region" description="Helical; Name=2" evidence="1">
    <location>
        <begin position="74"/>
        <end position="96"/>
    </location>
</feature>
<feature type="topological domain" description="Extracellular" evidence="7">
    <location>
        <begin position="97"/>
        <end position="110"/>
    </location>
</feature>
<feature type="transmembrane region" description="Helical; Name=3" evidence="1">
    <location>
        <begin position="111"/>
        <end position="133"/>
    </location>
</feature>
<feature type="topological domain" description="Cytoplasmic" evidence="7">
    <location>
        <begin position="134"/>
        <end position="152"/>
    </location>
</feature>
<feature type="transmembrane region" description="Helical; Name=4" evidence="1">
    <location>
        <begin position="153"/>
        <end position="173"/>
    </location>
</feature>
<feature type="topological domain" description="Extracellular" evidence="7">
    <location>
        <begin position="174"/>
        <end position="202"/>
    </location>
</feature>
<feature type="transmembrane region" description="Helical; Name=5" evidence="1">
    <location>
        <begin position="203"/>
        <end position="224"/>
    </location>
</feature>
<feature type="topological domain" description="Cytoplasmic" evidence="7">
    <location>
        <begin position="225"/>
        <end position="252"/>
    </location>
</feature>
<feature type="transmembrane region" description="Helical; Name=6" evidence="1">
    <location>
        <begin position="253"/>
        <end position="274"/>
    </location>
</feature>
<feature type="topological domain" description="Extracellular" evidence="7">
    <location>
        <begin position="275"/>
        <end position="286"/>
    </location>
</feature>
<feature type="transmembrane region" description="Helical; Name=7" evidence="1">
    <location>
        <begin position="287"/>
        <end position="308"/>
    </location>
</feature>
<feature type="topological domain" description="Cytoplasmic" evidence="7">
    <location>
        <begin position="309"/>
        <end position="354"/>
    </location>
</feature>
<feature type="region of interest" description="Disordered" evidence="5">
    <location>
        <begin position="331"/>
        <end position="354"/>
    </location>
</feature>
<feature type="short sequence motif" description="'Ionic lock' involved in activated form stabilization" evidence="1">
    <location>
        <begin position="134"/>
        <end position="136"/>
    </location>
</feature>
<feature type="compositionally biased region" description="Low complexity" evidence="5">
    <location>
        <begin position="334"/>
        <end position="354"/>
    </location>
</feature>
<feature type="site" description="Plays an important role in the conformation switch to the active conformation" evidence="1">
    <location>
        <position position="113"/>
    </location>
</feature>
<feature type="modified residue" description="N6-(retinylidene)lysine" evidence="1">
    <location>
        <position position="296"/>
    </location>
</feature>
<feature type="lipid moiety-binding region" description="S-palmitoyl cysteine" evidence="1">
    <location>
        <position position="322"/>
    </location>
</feature>
<feature type="lipid moiety-binding region" description="S-palmitoyl cysteine" evidence="1">
    <location>
        <position position="323"/>
    </location>
</feature>
<feature type="glycosylation site" description="N-linked (GlcNAc...) asparagine" evidence="3">
    <location>
        <position position="2"/>
    </location>
</feature>
<feature type="glycosylation site" description="N-linked (GlcNAc...) asparagine" evidence="3">
    <location>
        <position position="15"/>
    </location>
</feature>
<feature type="disulfide bond" evidence="4">
    <location>
        <begin position="110"/>
        <end position="187"/>
    </location>
</feature>
<keyword id="KW-0966">Cell projection</keyword>
<keyword id="KW-0157">Chromophore</keyword>
<keyword id="KW-1015">Disulfide bond</keyword>
<keyword id="KW-0297">G-protein coupled receptor</keyword>
<keyword id="KW-0325">Glycoprotein</keyword>
<keyword id="KW-0449">Lipoprotein</keyword>
<keyword id="KW-0472">Membrane</keyword>
<keyword id="KW-0564">Palmitate</keyword>
<keyword id="KW-0597">Phosphoprotein</keyword>
<keyword id="KW-0600">Photoreceptor protein</keyword>
<keyword id="KW-0675">Receptor</keyword>
<keyword id="KW-0681">Retinal protein</keyword>
<keyword id="KW-0716">Sensory transduction</keyword>
<keyword id="KW-0807">Transducer</keyword>
<keyword id="KW-0812">Transmembrane</keyword>
<keyword id="KW-1133">Transmembrane helix</keyword>
<keyword id="KW-0844">Vision</keyword>
<proteinExistence type="evidence at transcript level"/>
<organism>
    <name type="scientific">Aquarana catesbeiana</name>
    <name type="common">American bullfrog</name>
    <name type="synonym">Rana catesbeiana</name>
    <dbReference type="NCBI Taxonomy" id="8400"/>
    <lineage>
        <taxon>Eukaryota</taxon>
        <taxon>Metazoa</taxon>
        <taxon>Chordata</taxon>
        <taxon>Craniata</taxon>
        <taxon>Vertebrata</taxon>
        <taxon>Euteleostomi</taxon>
        <taxon>Amphibia</taxon>
        <taxon>Batrachia</taxon>
        <taxon>Anura</taxon>
        <taxon>Neobatrachia</taxon>
        <taxon>Ranoidea</taxon>
        <taxon>Ranidae</taxon>
        <taxon>Aquarana</taxon>
    </lineage>
</organism>
<evidence type="ECO:0000250" key="1">
    <source>
        <dbReference type="UniProtKB" id="P02699"/>
    </source>
</evidence>
<evidence type="ECO:0000250" key="2">
    <source>
        <dbReference type="UniProtKB" id="P08100"/>
    </source>
</evidence>
<evidence type="ECO:0000255" key="3"/>
<evidence type="ECO:0000255" key="4">
    <source>
        <dbReference type="PROSITE-ProRule" id="PRU00521"/>
    </source>
</evidence>
<evidence type="ECO:0000256" key="5">
    <source>
        <dbReference type="SAM" id="MobiDB-lite"/>
    </source>
</evidence>
<evidence type="ECO:0000269" key="6">
    <source>
    </source>
</evidence>
<evidence type="ECO:0000305" key="7"/>
<reference key="1">
    <citation type="journal article" date="1995" name="Comp. Biochem. Physiol.">
        <title>Cloning and expression of frog rhodopsin cDNA.</title>
        <authorList>
            <person name="Kayada S."/>
            <person name="Hisatomi O."/>
            <person name="Tokunaga F."/>
        </authorList>
    </citation>
    <scope>NUCLEOTIDE SEQUENCE [MRNA]</scope>
    <source>
        <tissue>Retina</tissue>
    </source>
</reference>
<reference key="2">
    <citation type="journal article" date="1971" name="J. Gen. Physiol.">
        <title>Rhodopsin and porphyropsin fields in the adult bullfrog retina.</title>
        <authorList>
            <person name="Reuter T.E."/>
            <person name="White R.H."/>
            <person name="Wald G."/>
        </authorList>
    </citation>
    <scope>FUNCTION</scope>
    <scope>TISSUE SPECIFICITY</scope>
</reference>